<protein>
    <recommendedName>
        <fullName evidence="1">Large ribosomal subunit protein uL24</fullName>
    </recommendedName>
    <alternativeName>
        <fullName evidence="2">50S ribosomal protein L24</fullName>
    </alternativeName>
</protein>
<sequence length="106" mass="11346">MNNIRKGDEVIVLTGRDKKRRGTVLARVDADHVLVEGVNVVKKHVKANPMANNPGGIVEKTMPIHVSNVALFNPATGKGDRVGVQEVDGRKVRVFRSNGAVVGAKA</sequence>
<accession>Q7VTC0</accession>
<evidence type="ECO:0000255" key="1">
    <source>
        <dbReference type="HAMAP-Rule" id="MF_01326"/>
    </source>
</evidence>
<evidence type="ECO:0000305" key="2"/>
<comment type="function">
    <text evidence="1">One of two assembly initiator proteins, it binds directly to the 5'-end of the 23S rRNA, where it nucleates assembly of the 50S subunit.</text>
</comment>
<comment type="function">
    <text evidence="1">One of the proteins that surrounds the polypeptide exit tunnel on the outside of the subunit.</text>
</comment>
<comment type="subunit">
    <text evidence="1">Part of the 50S ribosomal subunit.</text>
</comment>
<comment type="similarity">
    <text evidence="1">Belongs to the universal ribosomal protein uL24 family.</text>
</comment>
<organism>
    <name type="scientific">Bordetella pertussis (strain Tohama I / ATCC BAA-589 / NCTC 13251)</name>
    <dbReference type="NCBI Taxonomy" id="257313"/>
    <lineage>
        <taxon>Bacteria</taxon>
        <taxon>Pseudomonadati</taxon>
        <taxon>Pseudomonadota</taxon>
        <taxon>Betaproteobacteria</taxon>
        <taxon>Burkholderiales</taxon>
        <taxon>Alcaligenaceae</taxon>
        <taxon>Bordetella</taxon>
    </lineage>
</organism>
<keyword id="KW-1185">Reference proteome</keyword>
<keyword id="KW-0687">Ribonucleoprotein</keyword>
<keyword id="KW-0689">Ribosomal protein</keyword>
<keyword id="KW-0694">RNA-binding</keyword>
<keyword id="KW-0699">rRNA-binding</keyword>
<gene>
    <name evidence="1" type="primary">rplX</name>
    <name type="ordered locus">BP3627</name>
</gene>
<proteinExistence type="inferred from homology"/>
<feature type="chain" id="PRO_0000130629" description="Large ribosomal subunit protein uL24">
    <location>
        <begin position="1"/>
        <end position="106"/>
    </location>
</feature>
<dbReference type="EMBL" id="BX640422">
    <property type="protein sequence ID" value="CAE43884.1"/>
    <property type="molecule type" value="Genomic_DNA"/>
</dbReference>
<dbReference type="RefSeq" id="NP_882136.1">
    <property type="nucleotide sequence ID" value="NC_002929.2"/>
</dbReference>
<dbReference type="RefSeq" id="WP_003806917.1">
    <property type="nucleotide sequence ID" value="NZ_CP039022.1"/>
</dbReference>
<dbReference type="SMR" id="Q7VTC0"/>
<dbReference type="STRING" id="257313.BP3627"/>
<dbReference type="PaxDb" id="257313-BP3627"/>
<dbReference type="GeneID" id="93206272"/>
<dbReference type="KEGG" id="bpe:BP3627"/>
<dbReference type="PATRIC" id="fig|257313.5.peg.3924"/>
<dbReference type="eggNOG" id="COG0198">
    <property type="taxonomic scope" value="Bacteria"/>
</dbReference>
<dbReference type="HOGENOM" id="CLU_093315_2_2_4"/>
<dbReference type="Proteomes" id="UP000002676">
    <property type="component" value="Chromosome"/>
</dbReference>
<dbReference type="GO" id="GO:1990904">
    <property type="term" value="C:ribonucleoprotein complex"/>
    <property type="evidence" value="ECO:0007669"/>
    <property type="project" value="UniProtKB-KW"/>
</dbReference>
<dbReference type="GO" id="GO:0005840">
    <property type="term" value="C:ribosome"/>
    <property type="evidence" value="ECO:0007669"/>
    <property type="project" value="UniProtKB-KW"/>
</dbReference>
<dbReference type="GO" id="GO:0019843">
    <property type="term" value="F:rRNA binding"/>
    <property type="evidence" value="ECO:0007669"/>
    <property type="project" value="UniProtKB-UniRule"/>
</dbReference>
<dbReference type="GO" id="GO:0003735">
    <property type="term" value="F:structural constituent of ribosome"/>
    <property type="evidence" value="ECO:0007669"/>
    <property type="project" value="InterPro"/>
</dbReference>
<dbReference type="GO" id="GO:0006412">
    <property type="term" value="P:translation"/>
    <property type="evidence" value="ECO:0007669"/>
    <property type="project" value="UniProtKB-UniRule"/>
</dbReference>
<dbReference type="CDD" id="cd06089">
    <property type="entry name" value="KOW_RPL26"/>
    <property type="match status" value="1"/>
</dbReference>
<dbReference type="FunFam" id="2.30.30.30:FF:000004">
    <property type="entry name" value="50S ribosomal protein L24"/>
    <property type="match status" value="1"/>
</dbReference>
<dbReference type="Gene3D" id="2.30.30.30">
    <property type="match status" value="1"/>
</dbReference>
<dbReference type="HAMAP" id="MF_01326_B">
    <property type="entry name" value="Ribosomal_uL24_B"/>
    <property type="match status" value="1"/>
</dbReference>
<dbReference type="InterPro" id="IPR014722">
    <property type="entry name" value="Rib_uL2_dom2"/>
</dbReference>
<dbReference type="InterPro" id="IPR003256">
    <property type="entry name" value="Ribosomal_uL24"/>
</dbReference>
<dbReference type="InterPro" id="IPR005825">
    <property type="entry name" value="Ribosomal_uL24_CS"/>
</dbReference>
<dbReference type="InterPro" id="IPR041988">
    <property type="entry name" value="Ribosomal_uL24_KOW"/>
</dbReference>
<dbReference type="InterPro" id="IPR008991">
    <property type="entry name" value="Translation_prot_SH3-like_sf"/>
</dbReference>
<dbReference type="NCBIfam" id="TIGR01079">
    <property type="entry name" value="rplX_bact"/>
    <property type="match status" value="1"/>
</dbReference>
<dbReference type="PANTHER" id="PTHR12903">
    <property type="entry name" value="MITOCHONDRIAL RIBOSOMAL PROTEIN L24"/>
    <property type="match status" value="1"/>
</dbReference>
<dbReference type="Pfam" id="PF17136">
    <property type="entry name" value="ribosomal_L24"/>
    <property type="match status" value="1"/>
</dbReference>
<dbReference type="SUPFAM" id="SSF50104">
    <property type="entry name" value="Translation proteins SH3-like domain"/>
    <property type="match status" value="1"/>
</dbReference>
<dbReference type="PROSITE" id="PS01108">
    <property type="entry name" value="RIBOSOMAL_L24"/>
    <property type="match status" value="1"/>
</dbReference>
<name>RL24_BORPE</name>
<reference key="1">
    <citation type="journal article" date="2003" name="Nat. Genet.">
        <title>Comparative analysis of the genome sequences of Bordetella pertussis, Bordetella parapertussis and Bordetella bronchiseptica.</title>
        <authorList>
            <person name="Parkhill J."/>
            <person name="Sebaihia M."/>
            <person name="Preston A."/>
            <person name="Murphy L.D."/>
            <person name="Thomson N.R."/>
            <person name="Harris D.E."/>
            <person name="Holden M.T.G."/>
            <person name="Churcher C.M."/>
            <person name="Bentley S.D."/>
            <person name="Mungall K.L."/>
            <person name="Cerdeno-Tarraga A.-M."/>
            <person name="Temple L."/>
            <person name="James K.D."/>
            <person name="Harris B."/>
            <person name="Quail M.A."/>
            <person name="Achtman M."/>
            <person name="Atkin R."/>
            <person name="Baker S."/>
            <person name="Basham D."/>
            <person name="Bason N."/>
            <person name="Cherevach I."/>
            <person name="Chillingworth T."/>
            <person name="Collins M."/>
            <person name="Cronin A."/>
            <person name="Davis P."/>
            <person name="Doggett J."/>
            <person name="Feltwell T."/>
            <person name="Goble A."/>
            <person name="Hamlin N."/>
            <person name="Hauser H."/>
            <person name="Holroyd S."/>
            <person name="Jagels K."/>
            <person name="Leather S."/>
            <person name="Moule S."/>
            <person name="Norberczak H."/>
            <person name="O'Neil S."/>
            <person name="Ormond D."/>
            <person name="Price C."/>
            <person name="Rabbinowitsch E."/>
            <person name="Rutter S."/>
            <person name="Sanders M."/>
            <person name="Saunders D."/>
            <person name="Seeger K."/>
            <person name="Sharp S."/>
            <person name="Simmonds M."/>
            <person name="Skelton J."/>
            <person name="Squares R."/>
            <person name="Squares S."/>
            <person name="Stevens K."/>
            <person name="Unwin L."/>
            <person name="Whitehead S."/>
            <person name="Barrell B.G."/>
            <person name="Maskell D.J."/>
        </authorList>
    </citation>
    <scope>NUCLEOTIDE SEQUENCE [LARGE SCALE GENOMIC DNA]</scope>
    <source>
        <strain>Tohama I / ATCC BAA-589 / NCTC 13251</strain>
    </source>
</reference>